<keyword id="KW-0066">ATP synthesis</keyword>
<keyword id="KW-0997">Cell inner membrane</keyword>
<keyword id="KW-1003">Cell membrane</keyword>
<keyword id="KW-0138">CF(0)</keyword>
<keyword id="KW-0375">Hydrogen ion transport</keyword>
<keyword id="KW-0406">Ion transport</keyword>
<keyword id="KW-0472">Membrane</keyword>
<keyword id="KW-1185">Reference proteome</keyword>
<keyword id="KW-0812">Transmembrane</keyword>
<keyword id="KW-1133">Transmembrane helix</keyword>
<keyword id="KW-0813">Transport</keyword>
<accession>Q9KNH1</accession>
<evidence type="ECO:0000255" key="1">
    <source>
        <dbReference type="HAMAP-Rule" id="MF_01398"/>
    </source>
</evidence>
<feature type="chain" id="PRO_0000082396" description="ATP synthase subunit b">
    <location>
        <begin position="1"/>
        <end position="156"/>
    </location>
</feature>
<feature type="transmembrane region" description="Helical" evidence="1">
    <location>
        <begin position="7"/>
        <end position="29"/>
    </location>
</feature>
<proteinExistence type="inferred from homology"/>
<organism>
    <name type="scientific">Vibrio cholerae serotype O1 (strain ATCC 39315 / El Tor Inaba N16961)</name>
    <dbReference type="NCBI Taxonomy" id="243277"/>
    <lineage>
        <taxon>Bacteria</taxon>
        <taxon>Pseudomonadati</taxon>
        <taxon>Pseudomonadota</taxon>
        <taxon>Gammaproteobacteria</taxon>
        <taxon>Vibrionales</taxon>
        <taxon>Vibrionaceae</taxon>
        <taxon>Vibrio</taxon>
    </lineage>
</organism>
<reference key="1">
    <citation type="journal article" date="2000" name="Nature">
        <title>DNA sequence of both chromosomes of the cholera pathogen Vibrio cholerae.</title>
        <authorList>
            <person name="Heidelberg J.F."/>
            <person name="Eisen J.A."/>
            <person name="Nelson W.C."/>
            <person name="Clayton R.A."/>
            <person name="Gwinn M.L."/>
            <person name="Dodson R.J."/>
            <person name="Haft D.H."/>
            <person name="Hickey E.K."/>
            <person name="Peterson J.D."/>
            <person name="Umayam L.A."/>
            <person name="Gill S.R."/>
            <person name="Nelson K.E."/>
            <person name="Read T.D."/>
            <person name="Tettelin H."/>
            <person name="Richardson D.L."/>
            <person name="Ermolaeva M.D."/>
            <person name="Vamathevan J.J."/>
            <person name="Bass S."/>
            <person name="Qin H."/>
            <person name="Dragoi I."/>
            <person name="Sellers P."/>
            <person name="McDonald L.A."/>
            <person name="Utterback T.R."/>
            <person name="Fleischmann R.D."/>
            <person name="Nierman W.C."/>
            <person name="White O."/>
            <person name="Salzberg S.L."/>
            <person name="Smith H.O."/>
            <person name="Colwell R.R."/>
            <person name="Mekalanos J.J."/>
            <person name="Venter J.C."/>
            <person name="Fraser C.M."/>
        </authorList>
    </citation>
    <scope>NUCLEOTIDE SEQUENCE [LARGE SCALE GENOMIC DNA]</scope>
    <source>
        <strain>ATCC 39315 / El Tor Inaba N16961</strain>
    </source>
</reference>
<gene>
    <name evidence="1" type="primary">atpF</name>
    <name type="ordered locus">VC_2768</name>
</gene>
<comment type="function">
    <text evidence="1">F(1)F(0) ATP synthase produces ATP from ADP in the presence of a proton or sodium gradient. F-type ATPases consist of two structural domains, F(1) containing the extramembraneous catalytic core and F(0) containing the membrane proton channel, linked together by a central stalk and a peripheral stalk. During catalysis, ATP synthesis in the catalytic domain of F(1) is coupled via a rotary mechanism of the central stalk subunits to proton translocation.</text>
</comment>
<comment type="function">
    <text evidence="1">Component of the F(0) channel, it forms part of the peripheral stalk, linking F(1) to F(0).</text>
</comment>
<comment type="subunit">
    <text evidence="1">F-type ATPases have 2 components, F(1) - the catalytic core - and F(0) - the membrane proton channel. F(1) has five subunits: alpha(3), beta(3), gamma(1), delta(1), epsilon(1). F(0) has three main subunits: a(1), b(2) and c(10-14). The alpha and beta chains form an alternating ring which encloses part of the gamma chain. F(1) is attached to F(0) by a central stalk formed by the gamma and epsilon chains, while a peripheral stalk is formed by the delta and b chains.</text>
</comment>
<comment type="subcellular location">
    <subcellularLocation>
        <location evidence="1">Cell inner membrane</location>
        <topology evidence="1">Single-pass membrane protein</topology>
    </subcellularLocation>
</comment>
<comment type="similarity">
    <text evidence="1">Belongs to the ATPase B chain family.</text>
</comment>
<name>ATPF_VIBCH</name>
<protein>
    <recommendedName>
        <fullName evidence="1">ATP synthase subunit b</fullName>
    </recommendedName>
    <alternativeName>
        <fullName evidence="1">ATP synthase F(0) sector subunit b</fullName>
    </alternativeName>
    <alternativeName>
        <fullName evidence="1">ATPase subunit I</fullName>
    </alternativeName>
    <alternativeName>
        <fullName evidence="1">F-type ATPase subunit b</fullName>
        <shortName evidence="1">F-ATPase subunit b</shortName>
    </alternativeName>
</protein>
<dbReference type="EMBL" id="AE003852">
    <property type="protein sequence ID" value="AAF95907.1"/>
    <property type="molecule type" value="Genomic_DNA"/>
</dbReference>
<dbReference type="PIR" id="B82037">
    <property type="entry name" value="B82037"/>
</dbReference>
<dbReference type="RefSeq" id="NP_232394.1">
    <property type="nucleotide sequence ID" value="NC_002505.1"/>
</dbReference>
<dbReference type="RefSeq" id="WP_001884340.1">
    <property type="nucleotide sequence ID" value="NZ_LT906614.1"/>
</dbReference>
<dbReference type="SMR" id="Q9KNH1"/>
<dbReference type="STRING" id="243277.VC_2768"/>
<dbReference type="DNASU" id="2614945"/>
<dbReference type="EnsemblBacteria" id="AAF95907">
    <property type="protein sequence ID" value="AAF95907"/>
    <property type="gene ID" value="VC_2768"/>
</dbReference>
<dbReference type="KEGG" id="vch:VC_2768"/>
<dbReference type="PATRIC" id="fig|243277.26.peg.2643"/>
<dbReference type="eggNOG" id="COG0711">
    <property type="taxonomic scope" value="Bacteria"/>
</dbReference>
<dbReference type="HOGENOM" id="CLU_079215_4_5_6"/>
<dbReference type="Proteomes" id="UP000000584">
    <property type="component" value="Chromosome 1"/>
</dbReference>
<dbReference type="GO" id="GO:0005886">
    <property type="term" value="C:plasma membrane"/>
    <property type="evidence" value="ECO:0007669"/>
    <property type="project" value="UniProtKB-SubCell"/>
</dbReference>
<dbReference type="GO" id="GO:0045259">
    <property type="term" value="C:proton-transporting ATP synthase complex"/>
    <property type="evidence" value="ECO:0007669"/>
    <property type="project" value="UniProtKB-KW"/>
</dbReference>
<dbReference type="GO" id="GO:0046933">
    <property type="term" value="F:proton-transporting ATP synthase activity, rotational mechanism"/>
    <property type="evidence" value="ECO:0007669"/>
    <property type="project" value="UniProtKB-UniRule"/>
</dbReference>
<dbReference type="CDD" id="cd06503">
    <property type="entry name" value="ATP-synt_Fo_b"/>
    <property type="match status" value="1"/>
</dbReference>
<dbReference type="FunFam" id="1.20.5.620:FF:000001">
    <property type="entry name" value="ATP synthase subunit b"/>
    <property type="match status" value="1"/>
</dbReference>
<dbReference type="Gene3D" id="1.20.5.620">
    <property type="entry name" value="F1F0 ATP synthase subunit B, membrane domain"/>
    <property type="match status" value="1"/>
</dbReference>
<dbReference type="HAMAP" id="MF_01398">
    <property type="entry name" value="ATP_synth_b_bprime"/>
    <property type="match status" value="1"/>
</dbReference>
<dbReference type="InterPro" id="IPR028987">
    <property type="entry name" value="ATP_synth_B-like_membr_sf"/>
</dbReference>
<dbReference type="InterPro" id="IPR002146">
    <property type="entry name" value="ATP_synth_b/b'su_bac/chlpt"/>
</dbReference>
<dbReference type="InterPro" id="IPR005864">
    <property type="entry name" value="ATP_synth_F0_bsu_bac"/>
</dbReference>
<dbReference type="InterPro" id="IPR050059">
    <property type="entry name" value="ATP_synthase_B_chain"/>
</dbReference>
<dbReference type="NCBIfam" id="TIGR01144">
    <property type="entry name" value="ATP_synt_b"/>
    <property type="match status" value="1"/>
</dbReference>
<dbReference type="NCBIfam" id="NF004411">
    <property type="entry name" value="PRK05759.1-2"/>
    <property type="match status" value="1"/>
</dbReference>
<dbReference type="NCBIfam" id="NF004413">
    <property type="entry name" value="PRK05759.1-4"/>
    <property type="match status" value="1"/>
</dbReference>
<dbReference type="PANTHER" id="PTHR33445:SF1">
    <property type="entry name" value="ATP SYNTHASE SUBUNIT B"/>
    <property type="match status" value="1"/>
</dbReference>
<dbReference type="PANTHER" id="PTHR33445">
    <property type="entry name" value="ATP SYNTHASE SUBUNIT B', CHLOROPLASTIC"/>
    <property type="match status" value="1"/>
</dbReference>
<dbReference type="Pfam" id="PF00430">
    <property type="entry name" value="ATP-synt_B"/>
    <property type="match status" value="1"/>
</dbReference>
<dbReference type="SUPFAM" id="SSF81573">
    <property type="entry name" value="F1F0 ATP synthase subunit B, membrane domain"/>
    <property type="match status" value="1"/>
</dbReference>
<sequence>MNMNATLLGQAISFGMFVWFCMKYVWPPIIKAIEDRQKKIADGLQAAERAKKDLDLAQANASDQLKEAKRTATELIEQANKRKAQIIDEAREEAQAERQKILTQAEAEIEAERNRARDELRKQVATLAIAGAEKILERSIDKDTHKDILDNITAKL</sequence>